<proteinExistence type="inferred from homology"/>
<comment type="function">
    <text evidence="1">Component of the dark-operative protochlorophyllide reductase (DPOR) that uses Mg-ATP and reduced ferredoxin to reduce ring D of protochlorophyllide (Pchlide) to form chlorophyllide a (Chlide). This reaction is light-independent. The NB-protein (ChlN-ChlB) is the catalytic component of the complex.</text>
</comment>
<comment type="catalytic activity">
    <reaction evidence="1">
        <text>chlorophyllide a + oxidized 2[4Fe-4S]-[ferredoxin] + 2 ADP + 2 phosphate = protochlorophyllide a + reduced 2[4Fe-4S]-[ferredoxin] + 2 ATP + 2 H2O</text>
        <dbReference type="Rhea" id="RHEA:28202"/>
        <dbReference type="Rhea" id="RHEA-COMP:10002"/>
        <dbReference type="Rhea" id="RHEA-COMP:10004"/>
        <dbReference type="ChEBI" id="CHEBI:15377"/>
        <dbReference type="ChEBI" id="CHEBI:30616"/>
        <dbReference type="ChEBI" id="CHEBI:33722"/>
        <dbReference type="ChEBI" id="CHEBI:33723"/>
        <dbReference type="ChEBI" id="CHEBI:43474"/>
        <dbReference type="ChEBI" id="CHEBI:83348"/>
        <dbReference type="ChEBI" id="CHEBI:83350"/>
        <dbReference type="ChEBI" id="CHEBI:456216"/>
        <dbReference type="EC" id="1.3.7.7"/>
    </reaction>
</comment>
<comment type="cofactor">
    <cofactor evidence="1">
        <name>[4Fe-4S] cluster</name>
        <dbReference type="ChEBI" id="CHEBI:49883"/>
    </cofactor>
    <text evidence="1">Binds 1 [4Fe-4S] cluster per heterodimer. The cluster is bound at the heterodimer interface by residues from both subunits.</text>
</comment>
<comment type="pathway">
    <text evidence="1">Porphyrin-containing compound metabolism; chlorophyll biosynthesis (light-independent).</text>
</comment>
<comment type="subunit">
    <text evidence="1">Protochlorophyllide reductase is composed of three subunits; ChlL, ChlN and ChlB. Forms a heterotetramer of two ChlB and two ChlN subunits.</text>
</comment>
<comment type="subcellular location">
    <subcellularLocation>
        <location>Plastid</location>
        <location>Chloroplast</location>
    </subcellularLocation>
</comment>
<comment type="similarity">
    <text evidence="1">Belongs to the ChlB/BchB/BchZ family.</text>
</comment>
<accession>A6YGA3</accession>
<name>CHLB_PLETE</name>
<keyword id="KW-0004">4Fe-4S</keyword>
<keyword id="KW-0067">ATP-binding</keyword>
<keyword id="KW-0149">Chlorophyll biosynthesis</keyword>
<keyword id="KW-0150">Chloroplast</keyword>
<keyword id="KW-0408">Iron</keyword>
<keyword id="KW-0411">Iron-sulfur</keyword>
<keyword id="KW-0479">Metal-binding</keyword>
<keyword id="KW-0547">Nucleotide-binding</keyword>
<keyword id="KW-0560">Oxidoreductase</keyword>
<keyword id="KW-0602">Photosynthesis</keyword>
<keyword id="KW-0934">Plastid</keyword>
<reference key="1">
    <citation type="journal article" date="2007" name="BMC Genomics">
        <title>The chloroplast genome sequence of the green alga Leptosira terrestris: multiple losses of the inverted repeat and extensive genome rearrangements within the Trebouxiophyceae.</title>
        <authorList>
            <person name="de Cambiaire J.-C."/>
            <person name="Otis C."/>
            <person name="Turmel M."/>
            <person name="Lemieux C."/>
        </authorList>
    </citation>
    <scope>NUCLEOTIDE SEQUENCE [LARGE SCALE GENOMIC DNA]</scope>
    <source>
        <strain>CCAP 463/2 / UTEX 333</strain>
    </source>
</reference>
<geneLocation type="chloroplast"/>
<feature type="chain" id="PRO_0000324049" description="Light-independent protochlorophyllide reductase subunit B">
    <location>
        <begin position="1"/>
        <end position="514"/>
    </location>
</feature>
<feature type="active site" description="Proton donor" evidence="1">
    <location>
        <position position="300"/>
    </location>
</feature>
<feature type="binding site" evidence="1">
    <location>
        <position position="36"/>
    </location>
    <ligand>
        <name>[4Fe-4S] cluster</name>
        <dbReference type="ChEBI" id="CHEBI:49883"/>
        <note>ligand shared with heterodimeric partner</note>
    </ligand>
</feature>
<feature type="binding site" evidence="1">
    <location>
        <begin position="435"/>
        <end position="436"/>
    </location>
    <ligand>
        <name>substrate</name>
    </ligand>
</feature>
<evidence type="ECO:0000255" key="1">
    <source>
        <dbReference type="HAMAP-Rule" id="MF_00353"/>
    </source>
</evidence>
<organism>
    <name type="scientific">Pleurastrum terricola</name>
    <name type="common">Filamentous green alga</name>
    <name type="synonym">Leptosira terrestris</name>
    <dbReference type="NCBI Taxonomy" id="34116"/>
    <lineage>
        <taxon>Eukaryota</taxon>
        <taxon>Viridiplantae</taxon>
        <taxon>Chlorophyta</taxon>
        <taxon>core chlorophytes</taxon>
        <taxon>Chlorophyceae</taxon>
        <taxon>CS clade</taxon>
        <taxon>Chlamydomonadales</taxon>
        <taxon>Pleurastraceae</taxon>
        <taxon>Pleurastrum</taxon>
    </lineage>
</organism>
<sequence>MKLAYWMYAGPAHIGTLRVASSFKNVHAIMHAPLGDDYFNVMRSMLERERDFTPVTASIVDRHVLARGSQEKVVETITRKDKEEQPDLILLTPTCTSSILQEDLQNFVNRAATESKSDVILADVNHYRVNELQAADRTLEQIVRFYIEKAKTQNDLATIKTEKPSVNIIGIFTLGFHNHHDCRELKRLLTDLGISINEVIPEGGSIKNLKNLPKAWFNLIPYREVGLMTAKYLEKELNMPFVATTPMGVIDTAICIREIEAILNFTNQSKIDKEPYNFEDYIDQQTRFVSQAAWFSRSIDCQNLTGKKAIVFGDSTHAASMTKILAREMGIRISCAGTYCKHDADWFREQVSGFCDSVLITDDHTKVGDMIARVEPAAIFGTQMERHVGKRLDIPCGVISAPVHIQNFPLGYRPFLGYEGTNQIADLVYNSFTLGMEDHLLEIFGGHDTKQVITKSLSTDSNLTWTIEGLAELNKIPGFVRAKIKRNTEKFARENNISEITIETMYAAKEAVGA</sequence>
<protein>
    <recommendedName>
        <fullName evidence="1">Light-independent protochlorophyllide reductase subunit B</fullName>
        <shortName evidence="1">DPOR subunit B</shortName>
        <shortName evidence="1">LI-POR subunit B</shortName>
        <ecNumber evidence="1">1.3.7.7</ecNumber>
    </recommendedName>
</protein>
<dbReference type="EC" id="1.3.7.7" evidence="1"/>
<dbReference type="EMBL" id="EF506945">
    <property type="protein sequence ID" value="ABO69319.1"/>
    <property type="molecule type" value="Genomic_DNA"/>
</dbReference>
<dbReference type="RefSeq" id="YP_001382180.1">
    <property type="nucleotide sequence ID" value="NC_009681.1"/>
</dbReference>
<dbReference type="SMR" id="A6YGA3"/>
<dbReference type="GeneID" id="5383758"/>
<dbReference type="UniPathway" id="UPA00670"/>
<dbReference type="GO" id="GO:0009507">
    <property type="term" value="C:chloroplast"/>
    <property type="evidence" value="ECO:0007669"/>
    <property type="project" value="UniProtKB-SubCell"/>
</dbReference>
<dbReference type="GO" id="GO:0051539">
    <property type="term" value="F:4 iron, 4 sulfur cluster binding"/>
    <property type="evidence" value="ECO:0007669"/>
    <property type="project" value="UniProtKB-UniRule"/>
</dbReference>
<dbReference type="GO" id="GO:0005524">
    <property type="term" value="F:ATP binding"/>
    <property type="evidence" value="ECO:0007669"/>
    <property type="project" value="UniProtKB-UniRule"/>
</dbReference>
<dbReference type="GO" id="GO:0046872">
    <property type="term" value="F:metal ion binding"/>
    <property type="evidence" value="ECO:0007669"/>
    <property type="project" value="UniProtKB-KW"/>
</dbReference>
<dbReference type="GO" id="GO:0016730">
    <property type="term" value="F:oxidoreductase activity, acting on iron-sulfur proteins as donors"/>
    <property type="evidence" value="ECO:0007669"/>
    <property type="project" value="InterPro"/>
</dbReference>
<dbReference type="GO" id="GO:0016636">
    <property type="term" value="F:oxidoreductase activity, acting on the CH-CH group of donors, iron-sulfur protein as acceptor"/>
    <property type="evidence" value="ECO:0007669"/>
    <property type="project" value="UniProtKB-UniRule"/>
</dbReference>
<dbReference type="GO" id="GO:0036068">
    <property type="term" value="P:light-independent chlorophyll biosynthetic process"/>
    <property type="evidence" value="ECO:0007669"/>
    <property type="project" value="UniProtKB-UniRule"/>
</dbReference>
<dbReference type="GO" id="GO:0019685">
    <property type="term" value="P:photosynthesis, dark reaction"/>
    <property type="evidence" value="ECO:0007669"/>
    <property type="project" value="InterPro"/>
</dbReference>
<dbReference type="CDD" id="cd01981">
    <property type="entry name" value="Pchlide_reductase_B"/>
    <property type="match status" value="1"/>
</dbReference>
<dbReference type="Gene3D" id="1.20.89.20">
    <property type="match status" value="1"/>
</dbReference>
<dbReference type="Gene3D" id="3.40.50.1980">
    <property type="entry name" value="Nitrogenase molybdenum iron protein domain"/>
    <property type="match status" value="3"/>
</dbReference>
<dbReference type="Gene3D" id="1.10.8.550">
    <property type="entry name" value="Proto-chlorophyllide reductase 57 kD subunit B"/>
    <property type="match status" value="1"/>
</dbReference>
<dbReference type="HAMAP" id="MF_00353">
    <property type="entry name" value="ChlB_BchB"/>
    <property type="match status" value="1"/>
</dbReference>
<dbReference type="InterPro" id="IPR050152">
    <property type="entry name" value="ChlB/BchB/BchZ"/>
</dbReference>
<dbReference type="InterPro" id="IPR013580">
    <property type="entry name" value="LI-POR_suB-like_C"/>
</dbReference>
<dbReference type="InterPro" id="IPR000510">
    <property type="entry name" value="Nase/OxRdtase_comp1"/>
</dbReference>
<dbReference type="InterPro" id="IPR042298">
    <property type="entry name" value="P-CP_red_C"/>
</dbReference>
<dbReference type="InterPro" id="IPR005969">
    <property type="entry name" value="Protochl_reductB"/>
</dbReference>
<dbReference type="InterPro" id="IPR016209">
    <property type="entry name" value="Protochlorophyllide_Rdtase"/>
</dbReference>
<dbReference type="NCBIfam" id="TIGR01278">
    <property type="entry name" value="DPOR_BchB"/>
    <property type="match status" value="1"/>
</dbReference>
<dbReference type="PANTHER" id="PTHR33712">
    <property type="entry name" value="LIGHT-INDEPENDENT PROTOCHLOROPHYLLIDE REDUCTASE SUBUNIT B"/>
    <property type="match status" value="1"/>
</dbReference>
<dbReference type="PANTHER" id="PTHR33712:SF7">
    <property type="entry name" value="LIGHT-INDEPENDENT PROTOCHLOROPHYLLIDE REDUCTASE SUBUNIT B"/>
    <property type="match status" value="1"/>
</dbReference>
<dbReference type="Pfam" id="PF00148">
    <property type="entry name" value="Oxidored_nitro"/>
    <property type="match status" value="1"/>
</dbReference>
<dbReference type="Pfam" id="PF08369">
    <property type="entry name" value="PCP_red"/>
    <property type="match status" value="1"/>
</dbReference>
<dbReference type="PIRSF" id="PIRSF000163">
    <property type="entry name" value="PCP_ChlB"/>
    <property type="match status" value="1"/>
</dbReference>
<dbReference type="SUPFAM" id="SSF53807">
    <property type="entry name" value="Helical backbone' metal receptor"/>
    <property type="match status" value="1"/>
</dbReference>
<gene>
    <name evidence="1" type="primary">chlB</name>
</gene>